<evidence type="ECO:0000255" key="1">
    <source>
        <dbReference type="HAMAP-Rule" id="MF_00420"/>
    </source>
</evidence>
<feature type="chain" id="PRO_1000194829" description="Phosphoribosylformylglycinamidine synthase subunit PurL">
    <location>
        <begin position="1"/>
        <end position="748"/>
    </location>
</feature>
<feature type="active site" evidence="1">
    <location>
        <position position="47"/>
    </location>
</feature>
<feature type="active site" description="Proton acceptor" evidence="1">
    <location>
        <position position="94"/>
    </location>
</feature>
<feature type="binding site" evidence="1">
    <location>
        <position position="50"/>
    </location>
    <ligand>
        <name>ATP</name>
        <dbReference type="ChEBI" id="CHEBI:30616"/>
    </ligand>
</feature>
<feature type="binding site" evidence="1">
    <location>
        <position position="90"/>
    </location>
    <ligand>
        <name>ATP</name>
        <dbReference type="ChEBI" id="CHEBI:30616"/>
    </ligand>
</feature>
<feature type="binding site" evidence="1">
    <location>
        <position position="92"/>
    </location>
    <ligand>
        <name>Mg(2+)</name>
        <dbReference type="ChEBI" id="CHEBI:18420"/>
        <label>1</label>
    </ligand>
</feature>
<feature type="binding site" evidence="1">
    <location>
        <begin position="93"/>
        <end position="96"/>
    </location>
    <ligand>
        <name>substrate</name>
    </ligand>
</feature>
<feature type="binding site" evidence="1">
    <location>
        <position position="115"/>
    </location>
    <ligand>
        <name>substrate</name>
    </ligand>
</feature>
<feature type="binding site" evidence="1">
    <location>
        <position position="116"/>
    </location>
    <ligand>
        <name>Mg(2+)</name>
        <dbReference type="ChEBI" id="CHEBI:18420"/>
        <label>2</label>
    </ligand>
</feature>
<feature type="binding site" evidence="1">
    <location>
        <position position="240"/>
    </location>
    <ligand>
        <name>substrate</name>
    </ligand>
</feature>
<feature type="binding site" evidence="1">
    <location>
        <position position="268"/>
    </location>
    <ligand>
        <name>Mg(2+)</name>
        <dbReference type="ChEBI" id="CHEBI:18420"/>
        <label>2</label>
    </ligand>
</feature>
<feature type="binding site" evidence="1">
    <location>
        <begin position="312"/>
        <end position="314"/>
    </location>
    <ligand>
        <name>substrate</name>
    </ligand>
</feature>
<feature type="binding site" evidence="1">
    <location>
        <position position="500"/>
    </location>
    <ligand>
        <name>ATP</name>
        <dbReference type="ChEBI" id="CHEBI:30616"/>
    </ligand>
</feature>
<feature type="binding site" evidence="1">
    <location>
        <position position="537"/>
    </location>
    <ligand>
        <name>ATP</name>
        <dbReference type="ChEBI" id="CHEBI:30616"/>
    </ligand>
</feature>
<feature type="binding site" evidence="1">
    <location>
        <position position="538"/>
    </location>
    <ligand>
        <name>Mg(2+)</name>
        <dbReference type="ChEBI" id="CHEBI:18420"/>
        <label>1</label>
    </ligand>
</feature>
<feature type="binding site" evidence="1">
    <location>
        <position position="540"/>
    </location>
    <ligand>
        <name>substrate</name>
    </ligand>
</feature>
<protein>
    <recommendedName>
        <fullName evidence="1">Phosphoribosylformylglycinamidine synthase subunit PurL</fullName>
        <shortName evidence="1">FGAM synthase</shortName>
        <ecNumber evidence="1">6.3.5.3</ecNumber>
    </recommendedName>
    <alternativeName>
        <fullName evidence="1">Formylglycinamide ribonucleotide amidotransferase subunit II</fullName>
        <shortName evidence="1">FGAR amidotransferase II</shortName>
        <shortName evidence="1">FGAR-AT II</shortName>
    </alternativeName>
    <alternativeName>
        <fullName evidence="1">Glutamine amidotransferase PurL</fullName>
    </alternativeName>
    <alternativeName>
        <fullName evidence="1">Phosphoribosylformylglycinamidine synthase subunit II</fullName>
    </alternativeName>
</protein>
<gene>
    <name evidence="1" type="primary">purL</name>
    <name type="ordered locus">LEPBI_I2154</name>
</gene>
<reference key="1">
    <citation type="journal article" date="2008" name="PLoS ONE">
        <title>Genome sequence of the saprophyte Leptospira biflexa provides insights into the evolution of Leptospira and the pathogenesis of leptospirosis.</title>
        <authorList>
            <person name="Picardeau M."/>
            <person name="Bulach D.M."/>
            <person name="Bouchier C."/>
            <person name="Zuerner R.L."/>
            <person name="Zidane N."/>
            <person name="Wilson P.J."/>
            <person name="Creno S."/>
            <person name="Kuczek E.S."/>
            <person name="Bommezzadri S."/>
            <person name="Davis J.C."/>
            <person name="McGrath A."/>
            <person name="Johnson M.J."/>
            <person name="Boursaux-Eude C."/>
            <person name="Seemann T."/>
            <person name="Rouy Z."/>
            <person name="Coppel R.L."/>
            <person name="Rood J.I."/>
            <person name="Lajus A."/>
            <person name="Davies J.K."/>
            <person name="Medigue C."/>
            <person name="Adler B."/>
        </authorList>
    </citation>
    <scope>NUCLEOTIDE SEQUENCE [LARGE SCALE GENOMIC DNA]</scope>
    <source>
        <strain>Patoc 1 / ATCC 23582 / Paris</strain>
    </source>
</reference>
<proteinExistence type="inferred from homology"/>
<name>PURL_LEPBP</name>
<sequence length="748" mass="80636">MEKEKVSLADAKEHGLTETEFVEIQKILGRIPNSTELGIFSAMWSEHCSYKNSILKLKTLPTKSDKLLAGAGEENAGAMDIGDGLAVVFKIESHNHPTAVEPYQGAATGVGGIMRDIFTMGARPITSLNSLRFGDPKEPRNKYLLTRAVKGIGDYGNSLGIAVGGGELFLHPTFTKNPLVNAMTVGIAKHDEMASASTKGKVGNKVYIVGATTGRDGIHGASFASKDLTKESEEKRSAVQVGDPFMEKLLMEASLEAIQKKLLVGIQDMGAAGISCATSEMSAKGKTGMDVDLDKVPLREADMNAYEIMLSESQERMLVIPEVGKEGELVSIFHKWGLNAVEIGTVTADGILRIRKNGTLKAEIPAESLVLGGGAPRYVREEKRPTYLDEVVKFDPNKIPDLKPDTVPQTLNSLLSSLNISSRRPLYEQYDTEVGLVKVVEPGEDGGLVRIPGTKKGIAVATDCNSRYTYLNPYEGAQIAVCESARNVAATGAEPYGVTNNLNFGNPYIPENYYVFSECVRGLGDACRFLGLPVTGGNVSFYNESPEGPVFPTPTIGMVGVIDDVAKGLRTYPRTKEDVKYALVGNFQPTISASEYLYRSQGLDTGAIPNISLEKEKQTMDALIECRKNGLLTSAKDLSLGGLLVALAKIVIAGKKGVEVNLNELQTKVPRLDALCFGETGASFIVSFLPNDETKVRESFTSKGLSVYTLGSSSAKASLSVKGDGFHWEWTTKSLEVEFESGLKSYFE</sequence>
<comment type="function">
    <text evidence="1">Part of the phosphoribosylformylglycinamidine synthase complex involved in the purines biosynthetic pathway. Catalyzes the ATP-dependent conversion of formylglycinamide ribonucleotide (FGAR) and glutamine to yield formylglycinamidine ribonucleotide (FGAM) and glutamate. The FGAM synthase complex is composed of three subunits. PurQ produces an ammonia molecule by converting glutamine to glutamate. PurL transfers the ammonia molecule to FGAR to form FGAM in an ATP-dependent manner. PurS interacts with PurQ and PurL and is thought to assist in the transfer of the ammonia molecule from PurQ to PurL.</text>
</comment>
<comment type="catalytic activity">
    <reaction evidence="1">
        <text>N(2)-formyl-N(1)-(5-phospho-beta-D-ribosyl)glycinamide + L-glutamine + ATP + H2O = 2-formamido-N(1)-(5-O-phospho-beta-D-ribosyl)acetamidine + L-glutamate + ADP + phosphate + H(+)</text>
        <dbReference type="Rhea" id="RHEA:17129"/>
        <dbReference type="ChEBI" id="CHEBI:15377"/>
        <dbReference type="ChEBI" id="CHEBI:15378"/>
        <dbReference type="ChEBI" id="CHEBI:29985"/>
        <dbReference type="ChEBI" id="CHEBI:30616"/>
        <dbReference type="ChEBI" id="CHEBI:43474"/>
        <dbReference type="ChEBI" id="CHEBI:58359"/>
        <dbReference type="ChEBI" id="CHEBI:147286"/>
        <dbReference type="ChEBI" id="CHEBI:147287"/>
        <dbReference type="ChEBI" id="CHEBI:456216"/>
        <dbReference type="EC" id="6.3.5.3"/>
    </reaction>
</comment>
<comment type="pathway">
    <text evidence="1">Purine metabolism; IMP biosynthesis via de novo pathway; 5-amino-1-(5-phospho-D-ribosyl)imidazole from N(2)-formyl-N(1)-(5-phospho-D-ribosyl)glycinamide: step 1/2.</text>
</comment>
<comment type="subunit">
    <text evidence="1">Monomer. Part of the FGAM synthase complex composed of 1 PurL, 1 PurQ and 2 PurS subunits.</text>
</comment>
<comment type="subcellular location">
    <subcellularLocation>
        <location evidence="1">Cytoplasm</location>
    </subcellularLocation>
</comment>
<comment type="similarity">
    <text evidence="1">Belongs to the FGAMS family.</text>
</comment>
<organism>
    <name type="scientific">Leptospira biflexa serovar Patoc (strain Patoc 1 / ATCC 23582 / Paris)</name>
    <dbReference type="NCBI Taxonomy" id="456481"/>
    <lineage>
        <taxon>Bacteria</taxon>
        <taxon>Pseudomonadati</taxon>
        <taxon>Spirochaetota</taxon>
        <taxon>Spirochaetia</taxon>
        <taxon>Leptospirales</taxon>
        <taxon>Leptospiraceae</taxon>
        <taxon>Leptospira</taxon>
    </lineage>
</organism>
<accession>B0ST16</accession>
<dbReference type="EC" id="6.3.5.3" evidence="1"/>
<dbReference type="EMBL" id="CP000786">
    <property type="protein sequence ID" value="ABZ98256.1"/>
    <property type="molecule type" value="Genomic_DNA"/>
</dbReference>
<dbReference type="RefSeq" id="WP_012389126.1">
    <property type="nucleotide sequence ID" value="NC_010602.1"/>
</dbReference>
<dbReference type="SMR" id="B0ST16"/>
<dbReference type="STRING" id="456481.LEPBI_I2154"/>
<dbReference type="KEGG" id="lbi:LEPBI_I2154"/>
<dbReference type="HOGENOM" id="CLU_003100_0_1_12"/>
<dbReference type="OrthoDB" id="9804441at2"/>
<dbReference type="BioCyc" id="LBIF456481:LEPBI_RS10630-MONOMER"/>
<dbReference type="UniPathway" id="UPA00074">
    <property type="reaction ID" value="UER00128"/>
</dbReference>
<dbReference type="Proteomes" id="UP000001847">
    <property type="component" value="Chromosome I"/>
</dbReference>
<dbReference type="GO" id="GO:0005737">
    <property type="term" value="C:cytoplasm"/>
    <property type="evidence" value="ECO:0007669"/>
    <property type="project" value="UniProtKB-SubCell"/>
</dbReference>
<dbReference type="GO" id="GO:0005524">
    <property type="term" value="F:ATP binding"/>
    <property type="evidence" value="ECO:0007669"/>
    <property type="project" value="UniProtKB-UniRule"/>
</dbReference>
<dbReference type="GO" id="GO:0000287">
    <property type="term" value="F:magnesium ion binding"/>
    <property type="evidence" value="ECO:0007669"/>
    <property type="project" value="UniProtKB-UniRule"/>
</dbReference>
<dbReference type="GO" id="GO:0004642">
    <property type="term" value="F:phosphoribosylformylglycinamidine synthase activity"/>
    <property type="evidence" value="ECO:0007669"/>
    <property type="project" value="UniProtKB-UniRule"/>
</dbReference>
<dbReference type="GO" id="GO:0006189">
    <property type="term" value="P:'de novo' IMP biosynthetic process"/>
    <property type="evidence" value="ECO:0007669"/>
    <property type="project" value="UniProtKB-UniRule"/>
</dbReference>
<dbReference type="CDD" id="cd02203">
    <property type="entry name" value="PurL_repeat1"/>
    <property type="match status" value="1"/>
</dbReference>
<dbReference type="CDD" id="cd02204">
    <property type="entry name" value="PurL_repeat2"/>
    <property type="match status" value="1"/>
</dbReference>
<dbReference type="FunFam" id="3.30.1330.10:FF:000004">
    <property type="entry name" value="Phosphoribosylformylglycinamidine synthase subunit PurL"/>
    <property type="match status" value="1"/>
</dbReference>
<dbReference type="Gene3D" id="3.90.650.10">
    <property type="entry name" value="PurM-like C-terminal domain"/>
    <property type="match status" value="2"/>
</dbReference>
<dbReference type="Gene3D" id="3.30.1330.10">
    <property type="entry name" value="PurM-like, N-terminal domain"/>
    <property type="match status" value="2"/>
</dbReference>
<dbReference type="HAMAP" id="MF_00420">
    <property type="entry name" value="PurL_2"/>
    <property type="match status" value="1"/>
</dbReference>
<dbReference type="InterPro" id="IPR010074">
    <property type="entry name" value="PRibForGlyAmidine_synth_PurL"/>
</dbReference>
<dbReference type="InterPro" id="IPR041609">
    <property type="entry name" value="PurL_linker"/>
</dbReference>
<dbReference type="InterPro" id="IPR010918">
    <property type="entry name" value="PurM-like_C_dom"/>
</dbReference>
<dbReference type="InterPro" id="IPR036676">
    <property type="entry name" value="PurM-like_C_sf"/>
</dbReference>
<dbReference type="InterPro" id="IPR016188">
    <property type="entry name" value="PurM-like_N"/>
</dbReference>
<dbReference type="InterPro" id="IPR036921">
    <property type="entry name" value="PurM-like_N_sf"/>
</dbReference>
<dbReference type="NCBIfam" id="TIGR01736">
    <property type="entry name" value="FGAM_synth_II"/>
    <property type="match status" value="1"/>
</dbReference>
<dbReference type="NCBIfam" id="NF002290">
    <property type="entry name" value="PRK01213.1"/>
    <property type="match status" value="1"/>
</dbReference>
<dbReference type="PANTHER" id="PTHR43555">
    <property type="entry name" value="PHOSPHORIBOSYLFORMYLGLYCINAMIDINE SYNTHASE SUBUNIT PURL"/>
    <property type="match status" value="1"/>
</dbReference>
<dbReference type="PANTHER" id="PTHR43555:SF1">
    <property type="entry name" value="PHOSPHORIBOSYLFORMYLGLYCINAMIDINE SYNTHASE SUBUNIT PURL"/>
    <property type="match status" value="1"/>
</dbReference>
<dbReference type="Pfam" id="PF00586">
    <property type="entry name" value="AIRS"/>
    <property type="match status" value="2"/>
</dbReference>
<dbReference type="Pfam" id="PF02769">
    <property type="entry name" value="AIRS_C"/>
    <property type="match status" value="2"/>
</dbReference>
<dbReference type="Pfam" id="PF18072">
    <property type="entry name" value="FGAR-AT_linker"/>
    <property type="match status" value="1"/>
</dbReference>
<dbReference type="PIRSF" id="PIRSF001587">
    <property type="entry name" value="FGAM_synthase_II"/>
    <property type="match status" value="1"/>
</dbReference>
<dbReference type="SUPFAM" id="SSF56042">
    <property type="entry name" value="PurM C-terminal domain-like"/>
    <property type="match status" value="2"/>
</dbReference>
<dbReference type="SUPFAM" id="SSF55326">
    <property type="entry name" value="PurM N-terminal domain-like"/>
    <property type="match status" value="2"/>
</dbReference>
<keyword id="KW-0067">ATP-binding</keyword>
<keyword id="KW-0963">Cytoplasm</keyword>
<keyword id="KW-0436">Ligase</keyword>
<keyword id="KW-0460">Magnesium</keyword>
<keyword id="KW-0479">Metal-binding</keyword>
<keyword id="KW-0547">Nucleotide-binding</keyword>
<keyword id="KW-0658">Purine biosynthesis</keyword>
<keyword id="KW-1185">Reference proteome</keyword>